<keyword id="KW-0417">Keratinization</keyword>
<keyword id="KW-1185">Reference proteome</keyword>
<sequence>MSCQQNQQQCQPPPKCPPKCTPKCPPKCPPKCPPQCPAPCSPAVSSCCGPSSGSCCGPSSGGCCSSGGGGCCLSHHRPRLFHRRRHQSPDCCESEPSGASGCCHSSGGCC</sequence>
<evidence type="ECO:0000269" key="1">
    <source>
    </source>
</evidence>
<evidence type="ECO:0000305" key="2"/>
<name>LCE2D_HUMAN</name>
<protein>
    <recommendedName>
        <fullName>Late cornified envelope protein 2D</fullName>
    </recommendedName>
    <alternativeName>
        <fullName>Late envelope protein 12</fullName>
    </alternativeName>
    <alternativeName>
        <fullName>Small proline-rich-like epidermal differentiation complex protein 1A</fullName>
    </alternativeName>
</protein>
<feature type="chain" id="PRO_0000235332" description="Late cornified envelope protein 2D">
    <location>
        <begin position="1"/>
        <end position="110"/>
    </location>
</feature>
<feature type="sequence variant" id="VAR_053483" description="In dbSNP:rs11205064.">
    <original>C</original>
    <variation>Y</variation>
    <location>
        <position position="92"/>
    </location>
</feature>
<comment type="function">
    <text>Precursors of the cornified envelope of the stratum corneum.</text>
</comment>
<comment type="interaction">
    <interactant intactId="EBI-10246750">
        <id>Q5TA82</id>
    </interactant>
    <interactant intactId="EBI-10173507">
        <id>Q6UY14-3</id>
        <label>ADAMTSL4</label>
    </interactant>
    <organismsDiffer>false</organismsDiffer>
    <experiments>6</experiments>
</comment>
<comment type="interaction">
    <interactant intactId="EBI-10246750">
        <id>Q5TA82</id>
    </interactant>
    <interactant intactId="EBI-3867333">
        <id>A8MQ03</id>
        <label>CYSRT1</label>
    </interactant>
    <organismsDiffer>false</organismsDiffer>
    <experiments>3</experiments>
</comment>
<comment type="interaction">
    <interactant intactId="EBI-10246750">
        <id>Q5TA82</id>
    </interactant>
    <interactant intactId="EBI-743414">
        <id>O95967</id>
        <label>EFEMP2</label>
    </interactant>
    <organismsDiffer>false</organismsDiffer>
    <experiments>3</experiments>
</comment>
<comment type="interaction">
    <interactant intactId="EBI-10246750">
        <id>Q5TA82</id>
    </interactant>
    <interactant intactId="EBI-374781">
        <id>O76003</id>
        <label>GLRX3</label>
    </interactant>
    <organismsDiffer>false</organismsDiffer>
    <experiments>6</experiments>
</comment>
<comment type="interaction">
    <interactant intactId="EBI-10246750">
        <id>Q5TA82</id>
    </interactant>
    <interactant intactId="EBI-747754">
        <id>P28799</id>
        <label>GRN</label>
    </interactant>
    <organismsDiffer>false</organismsDiffer>
    <experiments>3</experiments>
</comment>
<comment type="interaction">
    <interactant intactId="EBI-10246750">
        <id>Q5TA82</id>
    </interactant>
    <interactant intactId="EBI-11978177">
        <id>Q96NT3-2</id>
        <label>GUCD1</label>
    </interactant>
    <organismsDiffer>false</organismsDiffer>
    <experiments>3</experiments>
</comment>
<comment type="interaction">
    <interactant intactId="EBI-10246750">
        <id>Q5TA82</id>
    </interactant>
    <interactant intactId="EBI-740785">
        <id>P49639</id>
        <label>HOXA1</label>
    </interactant>
    <organismsDiffer>false</organismsDiffer>
    <experiments>8</experiments>
</comment>
<comment type="interaction">
    <interactant intactId="EBI-10246750">
        <id>Q5TA82</id>
    </interactant>
    <interactant intactId="EBI-11959885">
        <id>Q07627</id>
        <label>KRTAP1-1</label>
    </interactant>
    <organismsDiffer>false</organismsDiffer>
    <experiments>3</experiments>
</comment>
<comment type="interaction">
    <interactant intactId="EBI-10246750">
        <id>Q5TA82</id>
    </interactant>
    <interactant intactId="EBI-11749135">
        <id>Q8IUG1</id>
        <label>KRTAP1-3</label>
    </interactant>
    <organismsDiffer>false</organismsDiffer>
    <experiments>3</experiments>
</comment>
<comment type="interaction">
    <interactant intactId="EBI-10246750">
        <id>Q5TA82</id>
    </interactant>
    <interactant intactId="EBI-11741292">
        <id>Q9BYS1</id>
        <label>KRTAP1-5</label>
    </interactant>
    <organismsDiffer>false</organismsDiffer>
    <experiments>3</experiments>
</comment>
<comment type="interaction">
    <interactant intactId="EBI-10246750">
        <id>Q5TA82</id>
    </interactant>
    <interactant intactId="EBI-10172150">
        <id>P60370</id>
        <label>KRTAP10-5</label>
    </interactant>
    <organismsDiffer>false</organismsDiffer>
    <experiments>3</experiments>
</comment>
<comment type="interaction">
    <interactant intactId="EBI-10246750">
        <id>Q5TA82</id>
    </interactant>
    <interactant intactId="EBI-12012928">
        <id>P60371</id>
        <label>KRTAP10-6</label>
    </interactant>
    <organismsDiffer>false</organismsDiffer>
    <experiments>3</experiments>
</comment>
<comment type="interaction">
    <interactant intactId="EBI-10246750">
        <id>Q5TA82</id>
    </interactant>
    <interactant intactId="EBI-10171774">
        <id>P60410</id>
        <label>KRTAP10-8</label>
    </interactant>
    <organismsDiffer>false</organismsDiffer>
    <experiments>8</experiments>
</comment>
<comment type="interaction">
    <interactant intactId="EBI-10246750">
        <id>Q5TA82</id>
    </interactant>
    <interactant intactId="EBI-10172052">
        <id>P60411</id>
        <label>KRTAP10-9</label>
    </interactant>
    <organismsDiffer>false</organismsDiffer>
    <experiments>6</experiments>
</comment>
<comment type="interaction">
    <interactant intactId="EBI-10246750">
        <id>Q5TA82</id>
    </interactant>
    <interactant intactId="EBI-11953334">
        <id>P60328</id>
        <label>KRTAP12-3</label>
    </interactant>
    <organismsDiffer>false</organismsDiffer>
    <experiments>3</experiments>
</comment>
<comment type="interaction">
    <interactant intactId="EBI-10246750">
        <id>Q5TA82</id>
    </interactant>
    <interactant intactId="EBI-11988175">
        <id>Q9BYP8</id>
        <label>KRTAP17-1</label>
    </interactant>
    <organismsDiffer>false</organismsDiffer>
    <experiments>3</experiments>
</comment>
<comment type="interaction">
    <interactant intactId="EBI-10246750">
        <id>Q5TA82</id>
    </interactant>
    <interactant intactId="EBI-12196745">
        <id>Q3LHN2</id>
        <label>KRTAP19-2</label>
    </interactant>
    <organismsDiffer>false</organismsDiffer>
    <experiments>3</experiments>
</comment>
<comment type="interaction">
    <interactant intactId="EBI-10246750">
        <id>Q5TA82</id>
    </interactant>
    <interactant intactId="EBI-14065470">
        <id>Q9BYR9</id>
        <label>KRTAP2-4</label>
    </interactant>
    <organismsDiffer>false</organismsDiffer>
    <experiments>3</experiments>
</comment>
<comment type="interaction">
    <interactant intactId="EBI-10246750">
        <id>Q5TA82</id>
    </interactant>
    <interactant intactId="EBI-34579671">
        <id>Q9BYQ7</id>
        <label>KRTAP4-1</label>
    </interactant>
    <organismsDiffer>false</organismsDiffer>
    <experiments>3</experiments>
</comment>
<comment type="interaction">
    <interactant intactId="EBI-10246750">
        <id>Q5TA82</id>
    </interactant>
    <interactant intactId="EBI-739863">
        <id>Q9BQ66</id>
        <label>KRTAP4-12</label>
    </interactant>
    <organismsDiffer>false</organismsDiffer>
    <experiments>6</experiments>
</comment>
<comment type="interaction">
    <interactant intactId="EBI-10246750">
        <id>Q5TA82</id>
    </interactant>
    <interactant intactId="EBI-10172511">
        <id>Q9BYR5</id>
        <label>KRTAP4-2</label>
    </interactant>
    <organismsDiffer>false</organismsDiffer>
    <experiments>6</experiments>
</comment>
<comment type="interaction">
    <interactant intactId="EBI-10246750">
        <id>Q5TA82</id>
    </interactant>
    <interactant intactId="EBI-11958178">
        <id>Q701N4</id>
        <label>KRTAP5-2</label>
    </interactant>
    <organismsDiffer>false</organismsDiffer>
    <experiments>3</experiments>
</comment>
<comment type="interaction">
    <interactant intactId="EBI-10246750">
        <id>Q5TA82</id>
    </interactant>
    <interactant intactId="EBI-10250562">
        <id>Q6L8G9</id>
        <label>KRTAP5-6</label>
    </interactant>
    <organismsDiffer>false</organismsDiffer>
    <experiments>3</experiments>
</comment>
<comment type="interaction">
    <interactant intactId="EBI-10246750">
        <id>Q5TA82</id>
    </interactant>
    <interactant intactId="EBI-11987425">
        <id>Q6L8G8</id>
        <label>KRTAP5-7</label>
    </interactant>
    <organismsDiffer>false</organismsDiffer>
    <experiments>3</experiments>
</comment>
<comment type="interaction">
    <interactant intactId="EBI-10246750">
        <id>Q5TA82</id>
    </interactant>
    <interactant intactId="EBI-3958099">
        <id>P26371</id>
        <label>KRTAP5-9</label>
    </interactant>
    <organismsDiffer>false</organismsDiffer>
    <experiments>3</experiments>
</comment>
<comment type="interaction">
    <interactant intactId="EBI-10246750">
        <id>Q5TA82</id>
    </interactant>
    <interactant intactId="EBI-11962084">
        <id>Q3LI66</id>
        <label>KRTAP6-2</label>
    </interactant>
    <organismsDiffer>false</organismsDiffer>
    <experiments>3</experiments>
</comment>
<comment type="interaction">
    <interactant intactId="EBI-10246750">
        <id>Q5TA82</id>
    </interactant>
    <interactant intactId="EBI-1043191">
        <id>Q9BYQ3</id>
        <label>KRTAP9-3</label>
    </interactant>
    <organismsDiffer>false</organismsDiffer>
    <experiments>3</experiments>
</comment>
<comment type="interaction">
    <interactant intactId="EBI-10246750">
        <id>Q5TA82</id>
    </interactant>
    <interactant intactId="EBI-11958364">
        <id>Q9BYQ0</id>
        <label>KRTAP9-8</label>
    </interactant>
    <organismsDiffer>false</organismsDiffer>
    <experiments>3</experiments>
</comment>
<comment type="interaction">
    <interactant intactId="EBI-10246750">
        <id>Q5TA82</id>
    </interactant>
    <interactant intactId="EBI-11962058">
        <id>Q5T7P2</id>
        <label>LCE1A</label>
    </interactant>
    <organismsDiffer>false</organismsDiffer>
    <experiments>3</experiments>
</comment>
<comment type="interaction">
    <interactant intactId="EBI-10246750">
        <id>Q5TA82</id>
    </interactant>
    <interactant intactId="EBI-10245913">
        <id>Q5T7P3</id>
        <label>LCE1B</label>
    </interactant>
    <organismsDiffer>false</organismsDiffer>
    <experiments>3</experiments>
</comment>
<comment type="interaction">
    <interactant intactId="EBI-10246750">
        <id>Q5TA82</id>
    </interactant>
    <interactant intactId="EBI-12224199">
        <id>Q5T751</id>
        <label>LCE1C</label>
    </interactant>
    <organismsDiffer>false</organismsDiffer>
    <experiments>3</experiments>
</comment>
<comment type="interaction">
    <interactant intactId="EBI-10246750">
        <id>Q5TA82</id>
    </interactant>
    <interactant intactId="EBI-11741311">
        <id>Q5T752</id>
        <label>LCE1D</label>
    </interactant>
    <organismsDiffer>false</organismsDiffer>
    <experiments>3</experiments>
</comment>
<comment type="interaction">
    <interactant intactId="EBI-10246750">
        <id>Q5TA82</id>
    </interactant>
    <interactant intactId="EBI-11958008">
        <id>Q5T754</id>
        <label>LCE1F</label>
    </interactant>
    <organismsDiffer>false</organismsDiffer>
    <experiments>3</experiments>
</comment>
<comment type="interaction">
    <interactant intactId="EBI-10246750">
        <id>Q5TA82</id>
    </interactant>
    <interactant intactId="EBI-11478468">
        <id>O14633</id>
        <label>LCE2B</label>
    </interactant>
    <organismsDiffer>false</organismsDiffer>
    <experiments>3</experiments>
</comment>
<comment type="interaction">
    <interactant intactId="EBI-10246750">
        <id>Q5TA82</id>
    </interactant>
    <interactant intactId="EBI-11973993">
        <id>Q5TA81</id>
        <label>LCE2C</label>
    </interactant>
    <organismsDiffer>false</organismsDiffer>
    <experiments>3</experiments>
</comment>
<comment type="interaction">
    <interactant intactId="EBI-10246750">
        <id>Q5TA82</id>
    </interactant>
    <interactant intactId="EBI-749635">
        <id>P61601</id>
        <label>NCALD</label>
    </interactant>
    <organismsDiffer>false</organismsDiffer>
    <experiments>3</experiments>
</comment>
<comment type="interaction">
    <interactant intactId="EBI-10246750">
        <id>Q5TA82</id>
    </interactant>
    <interactant intactId="EBI-945833">
        <id>Q7Z3S9</id>
        <label>NOTCH2NLA</label>
    </interactant>
    <organismsDiffer>false</organismsDiffer>
    <experiments>3</experiments>
</comment>
<comment type="interaction">
    <interactant intactId="EBI-10246750">
        <id>Q5TA82</id>
    </interactant>
    <interactant intactId="EBI-22310682">
        <id>P0DPK4</id>
        <label>NOTCH2NLC</label>
    </interactant>
    <organismsDiffer>false</organismsDiffer>
    <experiments>3</experiments>
</comment>
<comment type="interaction">
    <interactant intactId="EBI-10246750">
        <id>Q5TA82</id>
    </interactant>
    <interactant intactId="EBI-13644623">
        <id>Q92570</id>
        <label>NR4A3</label>
    </interactant>
    <organismsDiffer>false</organismsDiffer>
    <experiments>3</experiments>
</comment>
<comment type="interaction">
    <interactant intactId="EBI-10246750">
        <id>Q5TA82</id>
    </interactant>
    <interactant intactId="EBI-1210753">
        <id>Q7Z417</id>
        <label>NUFIP2</label>
    </interactant>
    <organismsDiffer>false</organismsDiffer>
    <experiments>3</experiments>
</comment>
<comment type="interaction">
    <interactant intactId="EBI-10246750">
        <id>Q5TA82</id>
    </interactant>
    <interactant intactId="EBI-740446">
        <id>P32242</id>
        <label>OTX1</label>
    </interactant>
    <organismsDiffer>false</organismsDiffer>
    <experiments>6</experiments>
</comment>
<comment type="interaction">
    <interactant intactId="EBI-10246750">
        <id>Q5TA82</id>
    </interactant>
    <interactant intactId="EBI-395883">
        <id>P07237</id>
        <label>P4HB</label>
    </interactant>
    <organismsDiffer>false</organismsDiffer>
    <experiments>3</experiments>
</comment>
<comment type="interaction">
    <interactant intactId="EBI-10246750">
        <id>Q5TA82</id>
    </interactant>
    <interactant intactId="EBI-726466">
        <id>O15496</id>
        <label>PLA2G10</label>
    </interactant>
    <organismsDiffer>false</organismsDiffer>
    <experiments>3</experiments>
</comment>
<comment type="interaction">
    <interactant intactId="EBI-10246750">
        <id>Q5TA82</id>
    </interactant>
    <interactant intactId="EBI-740019">
        <id>O15162</id>
        <label>PLSCR1</label>
    </interactant>
    <organismsDiffer>false</organismsDiffer>
    <experiments>3</experiments>
</comment>
<comment type="interaction">
    <interactant intactId="EBI-10246750">
        <id>Q5TA82</id>
    </interactant>
    <interactant intactId="EBI-1052678">
        <id>O76081</id>
        <label>RGS20</label>
    </interactant>
    <organismsDiffer>false</organismsDiffer>
    <experiments>3</experiments>
</comment>
<comment type="interaction">
    <interactant intactId="EBI-10246750">
        <id>Q5TA82</id>
    </interactant>
    <interactant intactId="EBI-2340927">
        <id>P78317</id>
        <label>RNF4</label>
    </interactant>
    <organismsDiffer>false</organismsDiffer>
    <experiments>3</experiments>
</comment>
<comment type="interaction">
    <interactant intactId="EBI-10246750">
        <id>Q5TA82</id>
    </interactant>
    <interactant intactId="EBI-1051105">
        <id>Q92504</id>
        <label>SLC39A7</label>
    </interactant>
    <organismsDiffer>false</organismsDiffer>
    <experiments>3</experiments>
</comment>
<comment type="interaction">
    <interactant intactId="EBI-10246750">
        <id>Q5TA82</id>
    </interactant>
    <interactant intactId="EBI-750494">
        <id>P49901</id>
        <label>SMCP</label>
    </interactant>
    <organismsDiffer>false</organismsDiffer>
    <experiments>3</experiments>
</comment>
<comment type="interaction">
    <interactant intactId="EBI-10246750">
        <id>Q5TA82</id>
    </interactant>
    <interactant intactId="EBI-3866665">
        <id>O43609</id>
        <label>SPRY1</label>
    </interactant>
    <organismsDiffer>false</organismsDiffer>
    <experiments>7</experiments>
</comment>
<comment type="interaction">
    <interactant intactId="EBI-10246750">
        <id>Q5TA82</id>
    </interactant>
    <interactant intactId="EBI-742487">
        <id>O43597</id>
        <label>SPRY2</label>
    </interactant>
    <organismsDiffer>false</organismsDiffer>
    <experiments>3</experiments>
</comment>
<comment type="interaction">
    <interactant intactId="EBI-10246750">
        <id>Q5TA82</id>
    </interactant>
    <interactant intactId="EBI-10175576">
        <id>G2XKQ0</id>
        <label>SUMO1P1</label>
    </interactant>
    <organismsDiffer>false</organismsDiffer>
    <experiments>3</experiments>
</comment>
<comment type="interaction">
    <interactant intactId="EBI-10246750">
        <id>Q5TA82</id>
    </interactant>
    <interactant intactId="EBI-5235829">
        <id>Q8IWZ5</id>
        <label>TRIM42</label>
    </interactant>
    <organismsDiffer>false</organismsDiffer>
    <experiments>3</experiments>
</comment>
<comment type="interaction">
    <interactant intactId="EBI-10246750">
        <id>Q5TA82</id>
    </interactant>
    <interactant intactId="EBI-8652667">
        <id>O14817</id>
        <label>TSPAN4</label>
    </interactant>
    <organismsDiffer>false</organismsDiffer>
    <experiments>3</experiments>
</comment>
<comment type="interaction">
    <interactant intactId="EBI-10246750">
        <id>Q5TA82</id>
    </interactant>
    <interactant intactId="EBI-10249550">
        <id>Q6EMK4</id>
        <label>VASN</label>
    </interactant>
    <organismsDiffer>false</organismsDiffer>
    <experiments>3</experiments>
</comment>
<comment type="interaction">
    <interactant intactId="EBI-10246750">
        <id>Q5TA82</id>
    </interactant>
    <interactant intactId="EBI-11957238">
        <id>Q2TAL6</id>
        <label>VWC2</label>
    </interactant>
    <organismsDiffer>false</organismsDiffer>
    <experiments>3</experiments>
</comment>
<comment type="tissue specificity">
    <text evidence="1">Skin-specific. Expression was readily detected in adult trunk skin, adult arm skin, fetal skin, penal skin, vulva, esophagus and tongue. Not expressed in the cervix, rectum, lung, colon, or placenta.</text>
</comment>
<comment type="induction">
    <text evidence="1">By calcium and UVB.</text>
</comment>
<comment type="miscellaneous">
    <text>Belongs to the LCE cluster present on 1q21.</text>
</comment>
<comment type="similarity">
    <text evidence="2">Belongs to the LCE family.</text>
</comment>
<organism>
    <name type="scientific">Homo sapiens</name>
    <name type="common">Human</name>
    <dbReference type="NCBI Taxonomy" id="9606"/>
    <lineage>
        <taxon>Eukaryota</taxon>
        <taxon>Metazoa</taxon>
        <taxon>Chordata</taxon>
        <taxon>Craniata</taxon>
        <taxon>Vertebrata</taxon>
        <taxon>Euteleostomi</taxon>
        <taxon>Mammalia</taxon>
        <taxon>Eutheria</taxon>
        <taxon>Euarchontoglires</taxon>
        <taxon>Primates</taxon>
        <taxon>Haplorrhini</taxon>
        <taxon>Catarrhini</taxon>
        <taxon>Hominidae</taxon>
        <taxon>Homo</taxon>
    </lineage>
</organism>
<dbReference type="EMBL" id="AL139247">
    <property type="status" value="NOT_ANNOTATED_CDS"/>
    <property type="molecule type" value="Genomic_DNA"/>
</dbReference>
<dbReference type="EMBL" id="CH471121">
    <property type="protein sequence ID" value="EAW53374.1"/>
    <property type="molecule type" value="Genomic_DNA"/>
</dbReference>
<dbReference type="EMBL" id="BC130603">
    <property type="protein sequence ID" value="AAI30604.1"/>
    <property type="molecule type" value="mRNA"/>
</dbReference>
<dbReference type="EMBL" id="BC130605">
    <property type="protein sequence ID" value="AAI30606.1"/>
    <property type="molecule type" value="mRNA"/>
</dbReference>
<dbReference type="CCDS" id="CCDS1018.1"/>
<dbReference type="RefSeq" id="NP_848517.1">
    <property type="nucleotide sequence ID" value="NM_178430.4"/>
</dbReference>
<dbReference type="BioGRID" id="131647">
    <property type="interactions" value="74"/>
</dbReference>
<dbReference type="FunCoup" id="Q5TA82">
    <property type="interactions" value="27"/>
</dbReference>
<dbReference type="IntAct" id="Q5TA82">
    <property type="interactions" value="55"/>
</dbReference>
<dbReference type="STRING" id="9606.ENSP00000357773"/>
<dbReference type="BioMuta" id="LCE2D"/>
<dbReference type="MassIVE" id="Q5TA82"/>
<dbReference type="PaxDb" id="9606-ENSP00000357773"/>
<dbReference type="PeptideAtlas" id="Q5TA82"/>
<dbReference type="DNASU" id="353141"/>
<dbReference type="Ensembl" id="ENST00000368784.2">
    <property type="protein sequence ID" value="ENSP00000357773.1"/>
    <property type="gene ID" value="ENSG00000187223.4"/>
</dbReference>
<dbReference type="GeneID" id="353141"/>
<dbReference type="KEGG" id="hsa:353141"/>
<dbReference type="MANE-Select" id="ENST00000368784.2">
    <property type="protein sequence ID" value="ENSP00000357773.1"/>
    <property type="RefSeq nucleotide sequence ID" value="NM_178430.4"/>
    <property type="RefSeq protein sequence ID" value="NP_848517.1"/>
</dbReference>
<dbReference type="UCSC" id="uc001fag.5">
    <property type="organism name" value="human"/>
</dbReference>
<dbReference type="AGR" id="HGNC:16518"/>
<dbReference type="CTD" id="353141"/>
<dbReference type="GeneCards" id="LCE2D"/>
<dbReference type="HGNC" id="HGNC:16518">
    <property type="gene designation" value="LCE2D"/>
</dbReference>
<dbReference type="HPA" id="ENSG00000187223">
    <property type="expression patterns" value="Tissue enriched (skin)"/>
</dbReference>
<dbReference type="MIM" id="612612">
    <property type="type" value="gene"/>
</dbReference>
<dbReference type="neXtProt" id="NX_Q5TA82"/>
<dbReference type="OpenTargets" id="ENSG00000187223"/>
<dbReference type="PharmGKB" id="PA38157"/>
<dbReference type="VEuPathDB" id="HostDB:ENSG00000187223"/>
<dbReference type="eggNOG" id="ENOG502TDZA">
    <property type="taxonomic scope" value="Eukaryota"/>
</dbReference>
<dbReference type="GeneTree" id="ENSGT00940000161842"/>
<dbReference type="HOGENOM" id="CLU_152038_0_0_1"/>
<dbReference type="InParanoid" id="Q5TA82"/>
<dbReference type="OMA" id="PDCCEGE"/>
<dbReference type="PAN-GO" id="Q5TA82">
    <property type="GO annotations" value="0 GO annotations based on evolutionary models"/>
</dbReference>
<dbReference type="PathwayCommons" id="Q5TA82"/>
<dbReference type="Reactome" id="R-HSA-6809371">
    <property type="pathway name" value="Formation of the cornified envelope"/>
</dbReference>
<dbReference type="SignaLink" id="Q5TA82"/>
<dbReference type="BioGRID-ORCS" id="353141">
    <property type="hits" value="202 hits in 1041 CRISPR screens"/>
</dbReference>
<dbReference type="GenomeRNAi" id="353141"/>
<dbReference type="Pharos" id="Q5TA82">
    <property type="development level" value="Tdark"/>
</dbReference>
<dbReference type="PRO" id="PR:Q5TA82"/>
<dbReference type="Proteomes" id="UP000005640">
    <property type="component" value="Chromosome 1"/>
</dbReference>
<dbReference type="RNAct" id="Q5TA82">
    <property type="molecule type" value="protein"/>
</dbReference>
<dbReference type="Bgee" id="ENSG00000187223">
    <property type="expression patterns" value="Expressed in skin of leg and 54 other cell types or tissues"/>
</dbReference>
<dbReference type="GO" id="GO:0031424">
    <property type="term" value="P:keratinization"/>
    <property type="evidence" value="ECO:0007669"/>
    <property type="project" value="UniProtKB-KW"/>
</dbReference>
<dbReference type="InterPro" id="IPR028205">
    <property type="entry name" value="LCE"/>
</dbReference>
<dbReference type="Pfam" id="PF14672">
    <property type="entry name" value="LCE"/>
    <property type="match status" value="2"/>
</dbReference>
<dbReference type="PRINTS" id="PR00021">
    <property type="entry name" value="PRORICH"/>
</dbReference>
<gene>
    <name type="primary">LCE2D</name>
    <name type="synonym">LEP12</name>
    <name type="synonym">SPRL1A</name>
</gene>
<reference key="1">
    <citation type="journal article" date="2006" name="Nature">
        <title>The DNA sequence and biological annotation of human chromosome 1.</title>
        <authorList>
            <person name="Gregory S.G."/>
            <person name="Barlow K.F."/>
            <person name="McLay K.E."/>
            <person name="Kaul R."/>
            <person name="Swarbreck D."/>
            <person name="Dunham A."/>
            <person name="Scott C.E."/>
            <person name="Howe K.L."/>
            <person name="Woodfine K."/>
            <person name="Spencer C.C.A."/>
            <person name="Jones M.C."/>
            <person name="Gillson C."/>
            <person name="Searle S."/>
            <person name="Zhou Y."/>
            <person name="Kokocinski F."/>
            <person name="McDonald L."/>
            <person name="Evans R."/>
            <person name="Phillips K."/>
            <person name="Atkinson A."/>
            <person name="Cooper R."/>
            <person name="Jones C."/>
            <person name="Hall R.E."/>
            <person name="Andrews T.D."/>
            <person name="Lloyd C."/>
            <person name="Ainscough R."/>
            <person name="Almeida J.P."/>
            <person name="Ambrose K.D."/>
            <person name="Anderson F."/>
            <person name="Andrew R.W."/>
            <person name="Ashwell R.I.S."/>
            <person name="Aubin K."/>
            <person name="Babbage A.K."/>
            <person name="Bagguley C.L."/>
            <person name="Bailey J."/>
            <person name="Beasley H."/>
            <person name="Bethel G."/>
            <person name="Bird C.P."/>
            <person name="Bray-Allen S."/>
            <person name="Brown J.Y."/>
            <person name="Brown A.J."/>
            <person name="Buckley D."/>
            <person name="Burton J."/>
            <person name="Bye J."/>
            <person name="Carder C."/>
            <person name="Chapman J.C."/>
            <person name="Clark S.Y."/>
            <person name="Clarke G."/>
            <person name="Clee C."/>
            <person name="Cobley V."/>
            <person name="Collier R.E."/>
            <person name="Corby N."/>
            <person name="Coville G.J."/>
            <person name="Davies J."/>
            <person name="Deadman R."/>
            <person name="Dunn M."/>
            <person name="Earthrowl M."/>
            <person name="Ellington A.G."/>
            <person name="Errington H."/>
            <person name="Frankish A."/>
            <person name="Frankland J."/>
            <person name="French L."/>
            <person name="Garner P."/>
            <person name="Garnett J."/>
            <person name="Gay L."/>
            <person name="Ghori M.R.J."/>
            <person name="Gibson R."/>
            <person name="Gilby L.M."/>
            <person name="Gillett W."/>
            <person name="Glithero R.J."/>
            <person name="Grafham D.V."/>
            <person name="Griffiths C."/>
            <person name="Griffiths-Jones S."/>
            <person name="Grocock R."/>
            <person name="Hammond S."/>
            <person name="Harrison E.S.I."/>
            <person name="Hart E."/>
            <person name="Haugen E."/>
            <person name="Heath P.D."/>
            <person name="Holmes S."/>
            <person name="Holt K."/>
            <person name="Howden P.J."/>
            <person name="Hunt A.R."/>
            <person name="Hunt S.E."/>
            <person name="Hunter G."/>
            <person name="Isherwood J."/>
            <person name="James R."/>
            <person name="Johnson C."/>
            <person name="Johnson D."/>
            <person name="Joy A."/>
            <person name="Kay M."/>
            <person name="Kershaw J.K."/>
            <person name="Kibukawa M."/>
            <person name="Kimberley A.M."/>
            <person name="King A."/>
            <person name="Knights A.J."/>
            <person name="Lad H."/>
            <person name="Laird G."/>
            <person name="Lawlor S."/>
            <person name="Leongamornlert D.A."/>
            <person name="Lloyd D.M."/>
            <person name="Loveland J."/>
            <person name="Lovell J."/>
            <person name="Lush M.J."/>
            <person name="Lyne R."/>
            <person name="Martin S."/>
            <person name="Mashreghi-Mohammadi M."/>
            <person name="Matthews L."/>
            <person name="Matthews N.S.W."/>
            <person name="McLaren S."/>
            <person name="Milne S."/>
            <person name="Mistry S."/>
            <person name="Moore M.J.F."/>
            <person name="Nickerson T."/>
            <person name="O'Dell C.N."/>
            <person name="Oliver K."/>
            <person name="Palmeiri A."/>
            <person name="Palmer S.A."/>
            <person name="Parker A."/>
            <person name="Patel D."/>
            <person name="Pearce A.V."/>
            <person name="Peck A.I."/>
            <person name="Pelan S."/>
            <person name="Phelps K."/>
            <person name="Phillimore B.J."/>
            <person name="Plumb R."/>
            <person name="Rajan J."/>
            <person name="Raymond C."/>
            <person name="Rouse G."/>
            <person name="Saenphimmachak C."/>
            <person name="Sehra H.K."/>
            <person name="Sheridan E."/>
            <person name="Shownkeen R."/>
            <person name="Sims S."/>
            <person name="Skuce C.D."/>
            <person name="Smith M."/>
            <person name="Steward C."/>
            <person name="Subramanian S."/>
            <person name="Sycamore N."/>
            <person name="Tracey A."/>
            <person name="Tromans A."/>
            <person name="Van Helmond Z."/>
            <person name="Wall M."/>
            <person name="Wallis J.M."/>
            <person name="White S."/>
            <person name="Whitehead S.L."/>
            <person name="Wilkinson J.E."/>
            <person name="Willey D.L."/>
            <person name="Williams H."/>
            <person name="Wilming L."/>
            <person name="Wray P.W."/>
            <person name="Wu Z."/>
            <person name="Coulson A."/>
            <person name="Vaudin M."/>
            <person name="Sulston J.E."/>
            <person name="Durbin R.M."/>
            <person name="Hubbard T."/>
            <person name="Wooster R."/>
            <person name="Dunham I."/>
            <person name="Carter N.P."/>
            <person name="McVean G."/>
            <person name="Ross M.T."/>
            <person name="Harrow J."/>
            <person name="Olson M.V."/>
            <person name="Beck S."/>
            <person name="Rogers J."/>
            <person name="Bentley D.R."/>
        </authorList>
    </citation>
    <scope>NUCLEOTIDE SEQUENCE [LARGE SCALE GENOMIC DNA]</scope>
</reference>
<reference key="2">
    <citation type="submission" date="2005-09" db="EMBL/GenBank/DDBJ databases">
        <authorList>
            <person name="Mural R.J."/>
            <person name="Istrail S."/>
            <person name="Sutton G.G."/>
            <person name="Florea L."/>
            <person name="Halpern A.L."/>
            <person name="Mobarry C.M."/>
            <person name="Lippert R."/>
            <person name="Walenz B."/>
            <person name="Shatkay H."/>
            <person name="Dew I."/>
            <person name="Miller J.R."/>
            <person name="Flanigan M.J."/>
            <person name="Edwards N.J."/>
            <person name="Bolanos R."/>
            <person name="Fasulo D."/>
            <person name="Halldorsson B.V."/>
            <person name="Hannenhalli S."/>
            <person name="Turner R."/>
            <person name="Yooseph S."/>
            <person name="Lu F."/>
            <person name="Nusskern D.R."/>
            <person name="Shue B.C."/>
            <person name="Zheng X.H."/>
            <person name="Zhong F."/>
            <person name="Delcher A.L."/>
            <person name="Huson D.H."/>
            <person name="Kravitz S.A."/>
            <person name="Mouchard L."/>
            <person name="Reinert K."/>
            <person name="Remington K.A."/>
            <person name="Clark A.G."/>
            <person name="Waterman M.S."/>
            <person name="Eichler E.E."/>
            <person name="Adams M.D."/>
            <person name="Hunkapiller M.W."/>
            <person name="Myers E.W."/>
            <person name="Venter J.C."/>
        </authorList>
    </citation>
    <scope>NUCLEOTIDE SEQUENCE [LARGE SCALE GENOMIC DNA]</scope>
</reference>
<reference key="3">
    <citation type="journal article" date="2004" name="Genome Res.">
        <title>The status, quality, and expansion of the NIH full-length cDNA project: the Mammalian Gene Collection (MGC).</title>
        <authorList>
            <consortium name="The MGC Project Team"/>
        </authorList>
    </citation>
    <scope>NUCLEOTIDE SEQUENCE [LARGE SCALE MRNA]</scope>
</reference>
<reference key="4">
    <citation type="journal article" date="2005" name="J. Invest. Dermatol.">
        <title>Late cornified envelope family in differentiating epithelia -- response to calcium and ultraviolet irradiation.</title>
        <authorList>
            <person name="Jackson B."/>
            <person name="Tilli C.L."/>
            <person name="Hardman M."/>
            <person name="Avilion A."/>
            <person name="Macleod M."/>
            <person name="Ashcroft G."/>
            <person name="Byrne C."/>
        </authorList>
    </citation>
    <scope>NOMENCLATURE</scope>
    <scope>TISSUE SPECIFICITY</scope>
    <scope>INDUCTION BY CALCIUM AND UVB</scope>
</reference>
<proteinExistence type="evidence at protein level"/>
<accession>Q5TA82</accession>
<accession>A1L4M8</accession>